<organism>
    <name type="scientific">Bos taurus</name>
    <name type="common">Bovine</name>
    <dbReference type="NCBI Taxonomy" id="9913"/>
    <lineage>
        <taxon>Eukaryota</taxon>
        <taxon>Metazoa</taxon>
        <taxon>Chordata</taxon>
        <taxon>Craniata</taxon>
        <taxon>Vertebrata</taxon>
        <taxon>Euteleostomi</taxon>
        <taxon>Mammalia</taxon>
        <taxon>Eutheria</taxon>
        <taxon>Laurasiatheria</taxon>
        <taxon>Artiodactyla</taxon>
        <taxon>Ruminantia</taxon>
        <taxon>Pecora</taxon>
        <taxon>Bovidae</taxon>
        <taxon>Bovinae</taxon>
        <taxon>Bos</taxon>
    </lineage>
</organism>
<protein>
    <recommendedName>
        <fullName>E3 ubiquitin-protein ligase MARCHF3</fullName>
        <ecNumber>2.3.2.27</ecNumber>
    </recommendedName>
    <alternativeName>
        <fullName>Membrane-associated RING finger protein 3</fullName>
    </alternativeName>
    <alternativeName>
        <fullName>Membrane-associated RING-CH protein III</fullName>
        <shortName>MARCH-III</shortName>
    </alternativeName>
    <alternativeName>
        <fullName evidence="6">RING-type E3 ubiquitin transferase MARCHF3</fullName>
    </alternativeName>
</protein>
<evidence type="ECO:0000250" key="1"/>
<evidence type="ECO:0000250" key="2">
    <source>
        <dbReference type="UniProtKB" id="Q5XIE5"/>
    </source>
</evidence>
<evidence type="ECO:0000250" key="3">
    <source>
        <dbReference type="UniProtKB" id="Q86UD3"/>
    </source>
</evidence>
<evidence type="ECO:0000255" key="4"/>
<evidence type="ECO:0000255" key="5">
    <source>
        <dbReference type="PROSITE-ProRule" id="PRU00623"/>
    </source>
</evidence>
<evidence type="ECO:0000305" key="6"/>
<keyword id="KW-0968">Cytoplasmic vesicle</keyword>
<keyword id="KW-0254">Endocytosis</keyword>
<keyword id="KW-0967">Endosome</keyword>
<keyword id="KW-0472">Membrane</keyword>
<keyword id="KW-0479">Metal-binding</keyword>
<keyword id="KW-0597">Phosphoprotein</keyword>
<keyword id="KW-1185">Reference proteome</keyword>
<keyword id="KW-0808">Transferase</keyword>
<keyword id="KW-0812">Transmembrane</keyword>
<keyword id="KW-1133">Transmembrane helix</keyword>
<keyword id="KW-0833">Ubl conjugation pathway</keyword>
<keyword id="KW-0862">Zinc</keyword>
<keyword id="KW-0863">Zinc-finger</keyword>
<comment type="function">
    <text evidence="2">E3 ubiquitin-protein ligase which may be involved in endosomal trafficking. E3 ubiquitin ligases accept ubiquitin from an E2 ubiquitin-conjugating enzyme in the form of a thioester and then directly transfer the ubiquitin to targeted substrates.</text>
</comment>
<comment type="catalytic activity">
    <reaction>
        <text>S-ubiquitinyl-[E2 ubiquitin-conjugating enzyme]-L-cysteine + [acceptor protein]-L-lysine = [E2 ubiquitin-conjugating enzyme]-L-cysteine + N(6)-ubiquitinyl-[acceptor protein]-L-lysine.</text>
        <dbReference type="EC" id="2.3.2.27"/>
    </reaction>
</comment>
<comment type="pathway">
    <text>Protein modification; protein ubiquitination.</text>
</comment>
<comment type="subunit">
    <text evidence="1">Interacts with MARCHF2 and STX6.</text>
</comment>
<comment type="subcellular location">
    <subcellularLocation>
        <location>Cytoplasmic vesicle membrane</location>
        <topology>Multi-pass membrane protein</topology>
    </subcellularLocation>
    <subcellularLocation>
        <location evidence="1">Early endosome membrane</location>
        <topology evidence="1">Multi-pass membrane protein</topology>
    </subcellularLocation>
</comment>
<comment type="domain">
    <text evidence="5">The RING-CH-type zinc finger domain is required for E3 ligase activity.</text>
</comment>
<gene>
    <name type="primary">MARCHF3</name>
    <name type="synonym">MARCH3</name>
</gene>
<feature type="chain" id="PRO_0000274507" description="E3 ubiquitin-protein ligase MARCHF3">
    <location>
        <begin position="1"/>
        <end position="253"/>
    </location>
</feature>
<feature type="transmembrane region" description="Helical" evidence="4">
    <location>
        <begin position="145"/>
        <end position="165"/>
    </location>
</feature>
<feature type="transmembrane region" description="Helical" evidence="4">
    <location>
        <begin position="182"/>
        <end position="202"/>
    </location>
</feature>
<feature type="zinc finger region" description="RING-CH-type" evidence="5">
    <location>
        <begin position="63"/>
        <end position="123"/>
    </location>
</feature>
<feature type="binding site" evidence="5">
    <location>
        <position position="71"/>
    </location>
    <ligand>
        <name>Zn(2+)</name>
        <dbReference type="ChEBI" id="CHEBI:29105"/>
        <label>1</label>
    </ligand>
</feature>
<feature type="binding site" evidence="5">
    <location>
        <position position="74"/>
    </location>
    <ligand>
        <name>Zn(2+)</name>
        <dbReference type="ChEBI" id="CHEBI:29105"/>
        <label>1</label>
    </ligand>
</feature>
<feature type="binding site" evidence="5">
    <location>
        <position position="87"/>
    </location>
    <ligand>
        <name>Zn(2+)</name>
        <dbReference type="ChEBI" id="CHEBI:29105"/>
        <label>2</label>
    </ligand>
</feature>
<feature type="binding site" evidence="5">
    <location>
        <position position="89"/>
    </location>
    <ligand>
        <name>Zn(2+)</name>
        <dbReference type="ChEBI" id="CHEBI:29105"/>
        <label>2</label>
    </ligand>
</feature>
<feature type="binding site" evidence="5">
    <location>
        <position position="97"/>
    </location>
    <ligand>
        <name>Zn(2+)</name>
        <dbReference type="ChEBI" id="CHEBI:29105"/>
        <label>1</label>
    </ligand>
</feature>
<feature type="binding site" evidence="5">
    <location>
        <position position="100"/>
    </location>
    <ligand>
        <name>Zn(2+)</name>
        <dbReference type="ChEBI" id="CHEBI:29105"/>
        <label>1</label>
    </ligand>
</feature>
<feature type="binding site" evidence="5">
    <location>
        <position position="113"/>
    </location>
    <ligand>
        <name>Zn(2+)</name>
        <dbReference type="ChEBI" id="CHEBI:29105"/>
        <label>2</label>
    </ligand>
</feature>
<feature type="binding site" evidence="5">
    <location>
        <position position="116"/>
    </location>
    <ligand>
        <name>Zn(2+)</name>
        <dbReference type="ChEBI" id="CHEBI:29105"/>
        <label>2</label>
    </ligand>
</feature>
<feature type="modified residue" description="Phosphoserine" evidence="3">
    <location>
        <position position="237"/>
    </location>
</feature>
<feature type="modified residue" description="Phosphoserine" evidence="3">
    <location>
        <position position="243"/>
    </location>
</feature>
<sequence>MTTSRCSHLPEVLPDCTGSAAPVVKTVEDCGSLVNGQPQYVMQVSAKDGQLLSTVVRTLATQSPFNDRPMCRICHEGSSQEDLLSPCECTGTLGTIHRSCLEHWLSSSNTSYCELCHFRFAVERKPRPLVEWLRNPGPQHEKRTLFGDMVCFLFITPLATISGWLCLRGAVDHLHFSSRLEAVGLIALTVALFTIYLFWTLVSFRYHCRLYNEWRRTNQRVILLIPKSVNIPSNQQSLLGLHSAKRNSKETIV</sequence>
<name>MARH3_BOVIN</name>
<accession>A0JN69</accession>
<reference key="1">
    <citation type="submission" date="2006-10" db="EMBL/GenBank/DDBJ databases">
        <authorList>
            <consortium name="NIH - Mammalian Gene Collection (MGC) project"/>
        </authorList>
    </citation>
    <scope>NUCLEOTIDE SEQUENCE [LARGE SCALE MRNA]</scope>
    <source>
        <strain>Hereford</strain>
        <tissue>Fetal spinal cord</tissue>
    </source>
</reference>
<dbReference type="EC" id="2.3.2.27"/>
<dbReference type="EMBL" id="BC126540">
    <property type="protein sequence ID" value="AAI26541.1"/>
    <property type="molecule type" value="mRNA"/>
</dbReference>
<dbReference type="RefSeq" id="NP_001071409.1">
    <property type="nucleotide sequence ID" value="NM_001077941.1"/>
</dbReference>
<dbReference type="RefSeq" id="XP_059744166.1">
    <property type="nucleotide sequence ID" value="XM_059888183.1"/>
</dbReference>
<dbReference type="SMR" id="A0JN69"/>
<dbReference type="FunCoup" id="A0JN69">
    <property type="interactions" value="176"/>
</dbReference>
<dbReference type="STRING" id="9913.ENSBTAP00000008938"/>
<dbReference type="PaxDb" id="9913-ENSBTAP00000008938"/>
<dbReference type="Ensembl" id="ENSBTAT00000008938.6">
    <property type="protein sequence ID" value="ENSBTAP00000008938.4"/>
    <property type="gene ID" value="ENSBTAG00000006797.6"/>
</dbReference>
<dbReference type="GeneID" id="520348"/>
<dbReference type="KEGG" id="bta:520348"/>
<dbReference type="CTD" id="115123"/>
<dbReference type="VEuPathDB" id="HostDB:ENSBTAG00000006797"/>
<dbReference type="VGNC" id="VGNC:31239">
    <property type="gene designation" value="MARCHF3"/>
</dbReference>
<dbReference type="eggNOG" id="KOG1609">
    <property type="taxonomic scope" value="Eukaryota"/>
</dbReference>
<dbReference type="GeneTree" id="ENSGT00940000159206"/>
<dbReference type="HOGENOM" id="CLU_096532_0_0_1"/>
<dbReference type="InParanoid" id="A0JN69"/>
<dbReference type="OMA" id="FNDQPIC"/>
<dbReference type="OrthoDB" id="273089at2759"/>
<dbReference type="TreeFam" id="TF319557"/>
<dbReference type="UniPathway" id="UPA00143"/>
<dbReference type="Proteomes" id="UP000009136">
    <property type="component" value="Chromosome 7"/>
</dbReference>
<dbReference type="Bgee" id="ENSBTAG00000006797">
    <property type="expression patterns" value="Expressed in rumen papilla and 102 other cell types or tissues"/>
</dbReference>
<dbReference type="GO" id="GO:0031901">
    <property type="term" value="C:early endosome membrane"/>
    <property type="evidence" value="ECO:0007669"/>
    <property type="project" value="UniProtKB-SubCell"/>
</dbReference>
<dbReference type="GO" id="GO:0005768">
    <property type="term" value="C:endosome"/>
    <property type="evidence" value="ECO:0000250"/>
    <property type="project" value="UniProtKB"/>
</dbReference>
<dbReference type="GO" id="GO:0005764">
    <property type="term" value="C:lysosome"/>
    <property type="evidence" value="ECO:0000250"/>
    <property type="project" value="UniProtKB"/>
</dbReference>
<dbReference type="GO" id="GO:0004842">
    <property type="term" value="F:ubiquitin-protein transferase activity"/>
    <property type="evidence" value="ECO:0000318"/>
    <property type="project" value="GO_Central"/>
</dbReference>
<dbReference type="GO" id="GO:0008270">
    <property type="term" value="F:zinc ion binding"/>
    <property type="evidence" value="ECO:0007669"/>
    <property type="project" value="UniProtKB-KW"/>
</dbReference>
<dbReference type="GO" id="GO:0006897">
    <property type="term" value="P:endocytosis"/>
    <property type="evidence" value="ECO:0007669"/>
    <property type="project" value="UniProtKB-KW"/>
</dbReference>
<dbReference type="GO" id="GO:0016567">
    <property type="term" value="P:protein ubiquitination"/>
    <property type="evidence" value="ECO:0000318"/>
    <property type="project" value="GO_Central"/>
</dbReference>
<dbReference type="CDD" id="cd16809">
    <property type="entry name" value="RING_CH-C4HC3_MARCH3"/>
    <property type="match status" value="1"/>
</dbReference>
<dbReference type="FunFam" id="3.30.40.10:FF:000119">
    <property type="entry name" value="E3 ubiquitin-protein ligase MARCH2"/>
    <property type="match status" value="1"/>
</dbReference>
<dbReference type="Gene3D" id="3.30.40.10">
    <property type="entry name" value="Zinc/RING finger domain, C3HC4 (zinc finger)"/>
    <property type="match status" value="1"/>
</dbReference>
<dbReference type="InterPro" id="IPR001841">
    <property type="entry name" value="Znf_RING"/>
</dbReference>
<dbReference type="InterPro" id="IPR011016">
    <property type="entry name" value="Znf_RING-CH"/>
</dbReference>
<dbReference type="InterPro" id="IPR013083">
    <property type="entry name" value="Znf_RING/FYVE/PHD"/>
</dbReference>
<dbReference type="PANTHER" id="PTHR46065">
    <property type="entry name" value="E3 UBIQUITIN-PROTEIN LIGASE MARCH 2/3 FAMILY MEMBER"/>
    <property type="match status" value="1"/>
</dbReference>
<dbReference type="PANTHER" id="PTHR46065:SF2">
    <property type="entry name" value="E3 UBIQUITIN-PROTEIN LIGASE MARCHF3"/>
    <property type="match status" value="1"/>
</dbReference>
<dbReference type="Pfam" id="PF12906">
    <property type="entry name" value="RINGv"/>
    <property type="match status" value="1"/>
</dbReference>
<dbReference type="SMART" id="SM00744">
    <property type="entry name" value="RINGv"/>
    <property type="match status" value="1"/>
</dbReference>
<dbReference type="SUPFAM" id="SSF57850">
    <property type="entry name" value="RING/U-box"/>
    <property type="match status" value="1"/>
</dbReference>
<dbReference type="PROSITE" id="PS51292">
    <property type="entry name" value="ZF_RING_CH"/>
    <property type="match status" value="1"/>
</dbReference>
<proteinExistence type="evidence at transcript level"/>